<feature type="chain" id="PRO_0000385750" description="GTPase Obg">
    <location>
        <begin position="1"/>
        <end position="377"/>
    </location>
</feature>
<feature type="domain" description="Obg" evidence="2">
    <location>
        <begin position="1"/>
        <end position="159"/>
    </location>
</feature>
<feature type="domain" description="OBG-type G" evidence="1">
    <location>
        <begin position="160"/>
        <end position="336"/>
    </location>
</feature>
<feature type="region of interest" description="Disordered" evidence="3">
    <location>
        <begin position="127"/>
        <end position="148"/>
    </location>
</feature>
<feature type="region of interest" description="Disordered" evidence="3">
    <location>
        <begin position="339"/>
        <end position="377"/>
    </location>
</feature>
<feature type="binding site" evidence="1">
    <location>
        <begin position="166"/>
        <end position="173"/>
    </location>
    <ligand>
        <name>GTP</name>
        <dbReference type="ChEBI" id="CHEBI:37565"/>
    </ligand>
</feature>
<feature type="binding site" evidence="1">
    <location>
        <position position="173"/>
    </location>
    <ligand>
        <name>Mg(2+)</name>
        <dbReference type="ChEBI" id="CHEBI:18420"/>
    </ligand>
</feature>
<feature type="binding site" evidence="1">
    <location>
        <begin position="191"/>
        <end position="195"/>
    </location>
    <ligand>
        <name>GTP</name>
        <dbReference type="ChEBI" id="CHEBI:37565"/>
    </ligand>
</feature>
<feature type="binding site" evidence="1">
    <location>
        <position position="193"/>
    </location>
    <ligand>
        <name>Mg(2+)</name>
        <dbReference type="ChEBI" id="CHEBI:18420"/>
    </ligand>
</feature>
<feature type="binding site" evidence="1">
    <location>
        <begin position="213"/>
        <end position="216"/>
    </location>
    <ligand>
        <name>GTP</name>
        <dbReference type="ChEBI" id="CHEBI:37565"/>
    </ligand>
</feature>
<feature type="binding site" evidence="1">
    <location>
        <begin position="288"/>
        <end position="291"/>
    </location>
    <ligand>
        <name>GTP</name>
        <dbReference type="ChEBI" id="CHEBI:37565"/>
    </ligand>
</feature>
<feature type="binding site" evidence="1">
    <location>
        <begin position="317"/>
        <end position="319"/>
    </location>
    <ligand>
        <name>GTP</name>
        <dbReference type="ChEBI" id="CHEBI:37565"/>
    </ligand>
</feature>
<organism>
    <name type="scientific">Bordetella parapertussis (strain 12822 / ATCC BAA-587 / NCTC 13253)</name>
    <dbReference type="NCBI Taxonomy" id="257311"/>
    <lineage>
        <taxon>Bacteria</taxon>
        <taxon>Pseudomonadati</taxon>
        <taxon>Pseudomonadota</taxon>
        <taxon>Betaproteobacteria</taxon>
        <taxon>Burkholderiales</taxon>
        <taxon>Alcaligenaceae</taxon>
        <taxon>Bordetella</taxon>
    </lineage>
</organism>
<comment type="function">
    <text evidence="1">An essential GTPase which binds GTP, GDP and possibly (p)ppGpp with moderate affinity, with high nucleotide exchange rates and a fairly low GTP hydrolysis rate. Plays a role in control of the cell cycle, stress response, ribosome biogenesis and in those bacteria that undergo differentiation, in morphogenesis control.</text>
</comment>
<comment type="cofactor">
    <cofactor evidence="1">
        <name>Mg(2+)</name>
        <dbReference type="ChEBI" id="CHEBI:18420"/>
    </cofactor>
</comment>
<comment type="subunit">
    <text evidence="1">Monomer.</text>
</comment>
<comment type="subcellular location">
    <subcellularLocation>
        <location evidence="1">Cytoplasm</location>
    </subcellularLocation>
</comment>
<comment type="similarity">
    <text evidence="1">Belongs to the TRAFAC class OBG-HflX-like GTPase superfamily. OBG GTPase family.</text>
</comment>
<gene>
    <name evidence="1" type="primary">obg</name>
    <name type="ordered locus">BPP0309</name>
</gene>
<evidence type="ECO:0000255" key="1">
    <source>
        <dbReference type="HAMAP-Rule" id="MF_01454"/>
    </source>
</evidence>
<evidence type="ECO:0000255" key="2">
    <source>
        <dbReference type="PROSITE-ProRule" id="PRU01231"/>
    </source>
</evidence>
<evidence type="ECO:0000256" key="3">
    <source>
        <dbReference type="SAM" id="MobiDB-lite"/>
    </source>
</evidence>
<accession>Q7W1P2</accession>
<proteinExistence type="inferred from homology"/>
<name>OBG_BORPA</name>
<sequence>MKFVDEATIEVIAGKGGNGVASFRREKFIPKGGPDGGDGGRGGSIYAVADRNINTLIDFRYARLHRAKNGENGRGSDQYGAAAPDITLRVPVGTVVHDADTGEVLFDLDRHDQKVTLAAGGAGGMGNIHFKSSTNRAPRQWTPGKEGEQRRLRMELKVLADVGLLGLPNAGKSTLISRISNARPKIADYPFTTLHPNLGVVRTSPSRSFVVADIPGLIEGASEGAGLGHLFLRHLARTRVLLHLVDISSPDPEADPIEQAVVDANAIVEELRRYDPELAAKPRWLVLNKLDMVPDAQDAQQRFCAEFGWTGPVFAISGLNGEGTQDLIWALQDYLDAEKRKDQDAQDQADGTYVFEDPRFDASRGGAAPATPPGGDE</sequence>
<reference key="1">
    <citation type="journal article" date="2003" name="Nat. Genet.">
        <title>Comparative analysis of the genome sequences of Bordetella pertussis, Bordetella parapertussis and Bordetella bronchiseptica.</title>
        <authorList>
            <person name="Parkhill J."/>
            <person name="Sebaihia M."/>
            <person name="Preston A."/>
            <person name="Murphy L.D."/>
            <person name="Thomson N.R."/>
            <person name="Harris D.E."/>
            <person name="Holden M.T.G."/>
            <person name="Churcher C.M."/>
            <person name="Bentley S.D."/>
            <person name="Mungall K.L."/>
            <person name="Cerdeno-Tarraga A.-M."/>
            <person name="Temple L."/>
            <person name="James K.D."/>
            <person name="Harris B."/>
            <person name="Quail M.A."/>
            <person name="Achtman M."/>
            <person name="Atkin R."/>
            <person name="Baker S."/>
            <person name="Basham D."/>
            <person name="Bason N."/>
            <person name="Cherevach I."/>
            <person name="Chillingworth T."/>
            <person name="Collins M."/>
            <person name="Cronin A."/>
            <person name="Davis P."/>
            <person name="Doggett J."/>
            <person name="Feltwell T."/>
            <person name="Goble A."/>
            <person name="Hamlin N."/>
            <person name="Hauser H."/>
            <person name="Holroyd S."/>
            <person name="Jagels K."/>
            <person name="Leather S."/>
            <person name="Moule S."/>
            <person name="Norberczak H."/>
            <person name="O'Neil S."/>
            <person name="Ormond D."/>
            <person name="Price C."/>
            <person name="Rabbinowitsch E."/>
            <person name="Rutter S."/>
            <person name="Sanders M."/>
            <person name="Saunders D."/>
            <person name="Seeger K."/>
            <person name="Sharp S."/>
            <person name="Simmonds M."/>
            <person name="Skelton J."/>
            <person name="Squares R."/>
            <person name="Squares S."/>
            <person name="Stevens K."/>
            <person name="Unwin L."/>
            <person name="Whitehead S."/>
            <person name="Barrell B.G."/>
            <person name="Maskell D.J."/>
        </authorList>
    </citation>
    <scope>NUCLEOTIDE SEQUENCE [LARGE SCALE GENOMIC DNA]</scope>
    <source>
        <strain>12822 / ATCC BAA-587 / NCTC 13253</strain>
    </source>
</reference>
<dbReference type="EC" id="3.6.5.-" evidence="1"/>
<dbReference type="EMBL" id="BX640423">
    <property type="protein sequence ID" value="CAE40050.1"/>
    <property type="molecule type" value="Genomic_DNA"/>
</dbReference>
<dbReference type="SMR" id="Q7W1P2"/>
<dbReference type="KEGG" id="bpa:BPP0309"/>
<dbReference type="HOGENOM" id="CLU_011747_2_0_4"/>
<dbReference type="Proteomes" id="UP000001421">
    <property type="component" value="Chromosome"/>
</dbReference>
<dbReference type="GO" id="GO:0005737">
    <property type="term" value="C:cytoplasm"/>
    <property type="evidence" value="ECO:0007669"/>
    <property type="project" value="UniProtKB-SubCell"/>
</dbReference>
<dbReference type="GO" id="GO:0005525">
    <property type="term" value="F:GTP binding"/>
    <property type="evidence" value="ECO:0007669"/>
    <property type="project" value="UniProtKB-UniRule"/>
</dbReference>
<dbReference type="GO" id="GO:0003924">
    <property type="term" value="F:GTPase activity"/>
    <property type="evidence" value="ECO:0007669"/>
    <property type="project" value="UniProtKB-UniRule"/>
</dbReference>
<dbReference type="GO" id="GO:0000287">
    <property type="term" value="F:magnesium ion binding"/>
    <property type="evidence" value="ECO:0007669"/>
    <property type="project" value="InterPro"/>
</dbReference>
<dbReference type="GO" id="GO:0042254">
    <property type="term" value="P:ribosome biogenesis"/>
    <property type="evidence" value="ECO:0007669"/>
    <property type="project" value="UniProtKB-UniRule"/>
</dbReference>
<dbReference type="CDD" id="cd01898">
    <property type="entry name" value="Obg"/>
    <property type="match status" value="1"/>
</dbReference>
<dbReference type="FunFam" id="2.70.210.12:FF:000001">
    <property type="entry name" value="GTPase Obg"/>
    <property type="match status" value="1"/>
</dbReference>
<dbReference type="Gene3D" id="2.70.210.12">
    <property type="entry name" value="GTP1/OBG domain"/>
    <property type="match status" value="1"/>
</dbReference>
<dbReference type="Gene3D" id="3.40.50.300">
    <property type="entry name" value="P-loop containing nucleotide triphosphate hydrolases"/>
    <property type="match status" value="1"/>
</dbReference>
<dbReference type="HAMAP" id="MF_01454">
    <property type="entry name" value="GTPase_Obg"/>
    <property type="match status" value="1"/>
</dbReference>
<dbReference type="InterPro" id="IPR031167">
    <property type="entry name" value="G_OBG"/>
</dbReference>
<dbReference type="InterPro" id="IPR006073">
    <property type="entry name" value="GTP-bd"/>
</dbReference>
<dbReference type="InterPro" id="IPR014100">
    <property type="entry name" value="GTP-bd_Obg/CgtA"/>
</dbReference>
<dbReference type="InterPro" id="IPR006074">
    <property type="entry name" value="GTP1-OBG_CS"/>
</dbReference>
<dbReference type="InterPro" id="IPR006169">
    <property type="entry name" value="GTP1_OBG_dom"/>
</dbReference>
<dbReference type="InterPro" id="IPR036726">
    <property type="entry name" value="GTP1_OBG_dom_sf"/>
</dbReference>
<dbReference type="InterPro" id="IPR045086">
    <property type="entry name" value="OBG_GTPase"/>
</dbReference>
<dbReference type="InterPro" id="IPR027417">
    <property type="entry name" value="P-loop_NTPase"/>
</dbReference>
<dbReference type="NCBIfam" id="TIGR02729">
    <property type="entry name" value="Obg_CgtA"/>
    <property type="match status" value="1"/>
</dbReference>
<dbReference type="NCBIfam" id="NF008955">
    <property type="entry name" value="PRK12297.1"/>
    <property type="match status" value="1"/>
</dbReference>
<dbReference type="NCBIfam" id="NF008956">
    <property type="entry name" value="PRK12299.1"/>
    <property type="match status" value="1"/>
</dbReference>
<dbReference type="PANTHER" id="PTHR11702">
    <property type="entry name" value="DEVELOPMENTALLY REGULATED GTP-BINDING PROTEIN-RELATED"/>
    <property type="match status" value="1"/>
</dbReference>
<dbReference type="PANTHER" id="PTHR11702:SF31">
    <property type="entry name" value="MITOCHONDRIAL RIBOSOME-ASSOCIATED GTPASE 2"/>
    <property type="match status" value="1"/>
</dbReference>
<dbReference type="Pfam" id="PF01018">
    <property type="entry name" value="GTP1_OBG"/>
    <property type="match status" value="1"/>
</dbReference>
<dbReference type="Pfam" id="PF01926">
    <property type="entry name" value="MMR_HSR1"/>
    <property type="match status" value="1"/>
</dbReference>
<dbReference type="PIRSF" id="PIRSF002401">
    <property type="entry name" value="GTP_bd_Obg/CgtA"/>
    <property type="match status" value="1"/>
</dbReference>
<dbReference type="PRINTS" id="PR00326">
    <property type="entry name" value="GTP1OBG"/>
</dbReference>
<dbReference type="SUPFAM" id="SSF82051">
    <property type="entry name" value="Obg GTP-binding protein N-terminal domain"/>
    <property type="match status" value="1"/>
</dbReference>
<dbReference type="SUPFAM" id="SSF52540">
    <property type="entry name" value="P-loop containing nucleoside triphosphate hydrolases"/>
    <property type="match status" value="1"/>
</dbReference>
<dbReference type="PROSITE" id="PS51710">
    <property type="entry name" value="G_OBG"/>
    <property type="match status" value="1"/>
</dbReference>
<dbReference type="PROSITE" id="PS00905">
    <property type="entry name" value="GTP1_OBG"/>
    <property type="match status" value="1"/>
</dbReference>
<dbReference type="PROSITE" id="PS51883">
    <property type="entry name" value="OBG"/>
    <property type="match status" value="1"/>
</dbReference>
<protein>
    <recommendedName>
        <fullName evidence="1">GTPase Obg</fullName>
        <ecNumber evidence="1">3.6.5.-</ecNumber>
    </recommendedName>
    <alternativeName>
        <fullName evidence="1">GTP-binding protein Obg</fullName>
    </alternativeName>
</protein>
<keyword id="KW-0963">Cytoplasm</keyword>
<keyword id="KW-0342">GTP-binding</keyword>
<keyword id="KW-0378">Hydrolase</keyword>
<keyword id="KW-0460">Magnesium</keyword>
<keyword id="KW-0479">Metal-binding</keyword>
<keyword id="KW-0547">Nucleotide-binding</keyword>